<dbReference type="EC" id="7.5.2.6" evidence="1"/>
<dbReference type="EMBL" id="CP000050">
    <property type="protein sequence ID" value="AAY49058.1"/>
    <property type="molecule type" value="Genomic_DNA"/>
</dbReference>
<dbReference type="RefSeq" id="WP_011037271.1">
    <property type="nucleotide sequence ID" value="NZ_CP155948.1"/>
</dbReference>
<dbReference type="SMR" id="Q4UV65"/>
<dbReference type="KEGG" id="xcb:XC_1995"/>
<dbReference type="HOGENOM" id="CLU_000604_84_7_6"/>
<dbReference type="Proteomes" id="UP000000420">
    <property type="component" value="Chromosome"/>
</dbReference>
<dbReference type="GO" id="GO:0005886">
    <property type="term" value="C:plasma membrane"/>
    <property type="evidence" value="ECO:0007669"/>
    <property type="project" value="UniProtKB-SubCell"/>
</dbReference>
<dbReference type="GO" id="GO:0015421">
    <property type="term" value="F:ABC-type oligopeptide transporter activity"/>
    <property type="evidence" value="ECO:0007669"/>
    <property type="project" value="TreeGrafter"/>
</dbReference>
<dbReference type="GO" id="GO:0005524">
    <property type="term" value="F:ATP binding"/>
    <property type="evidence" value="ECO:0007669"/>
    <property type="project" value="UniProtKB-KW"/>
</dbReference>
<dbReference type="GO" id="GO:0016887">
    <property type="term" value="F:ATP hydrolysis activity"/>
    <property type="evidence" value="ECO:0007669"/>
    <property type="project" value="InterPro"/>
</dbReference>
<dbReference type="GO" id="GO:0034040">
    <property type="term" value="F:ATPase-coupled lipid transmembrane transporter activity"/>
    <property type="evidence" value="ECO:0007669"/>
    <property type="project" value="InterPro"/>
</dbReference>
<dbReference type="CDD" id="cd18552">
    <property type="entry name" value="ABC_6TM_MsbA_like"/>
    <property type="match status" value="1"/>
</dbReference>
<dbReference type="FunFam" id="3.40.50.300:FF:000140">
    <property type="entry name" value="Lipid A export ATP-binding/permease protein MsbA"/>
    <property type="match status" value="1"/>
</dbReference>
<dbReference type="Gene3D" id="1.20.1560.10">
    <property type="entry name" value="ABC transporter type 1, transmembrane domain"/>
    <property type="match status" value="1"/>
</dbReference>
<dbReference type="Gene3D" id="3.40.50.300">
    <property type="entry name" value="P-loop containing nucleotide triphosphate hydrolases"/>
    <property type="match status" value="1"/>
</dbReference>
<dbReference type="InterPro" id="IPR003593">
    <property type="entry name" value="AAA+_ATPase"/>
</dbReference>
<dbReference type="InterPro" id="IPR011527">
    <property type="entry name" value="ABC1_TM_dom"/>
</dbReference>
<dbReference type="InterPro" id="IPR036640">
    <property type="entry name" value="ABC1_TM_sf"/>
</dbReference>
<dbReference type="InterPro" id="IPR003439">
    <property type="entry name" value="ABC_transporter-like_ATP-bd"/>
</dbReference>
<dbReference type="InterPro" id="IPR017871">
    <property type="entry name" value="ABC_transporter-like_CS"/>
</dbReference>
<dbReference type="InterPro" id="IPR011917">
    <property type="entry name" value="ABC_transpr_lipidA"/>
</dbReference>
<dbReference type="InterPro" id="IPR027417">
    <property type="entry name" value="P-loop_NTPase"/>
</dbReference>
<dbReference type="InterPro" id="IPR039421">
    <property type="entry name" value="Type_1_exporter"/>
</dbReference>
<dbReference type="NCBIfam" id="TIGR02203">
    <property type="entry name" value="MsbA_lipidA"/>
    <property type="match status" value="1"/>
</dbReference>
<dbReference type="PANTHER" id="PTHR43394:SF1">
    <property type="entry name" value="ATP-BINDING CASSETTE SUB-FAMILY B MEMBER 10, MITOCHONDRIAL"/>
    <property type="match status" value="1"/>
</dbReference>
<dbReference type="PANTHER" id="PTHR43394">
    <property type="entry name" value="ATP-DEPENDENT PERMEASE MDL1, MITOCHONDRIAL"/>
    <property type="match status" value="1"/>
</dbReference>
<dbReference type="Pfam" id="PF00664">
    <property type="entry name" value="ABC_membrane"/>
    <property type="match status" value="1"/>
</dbReference>
<dbReference type="Pfam" id="PF00005">
    <property type="entry name" value="ABC_tran"/>
    <property type="match status" value="1"/>
</dbReference>
<dbReference type="SMART" id="SM00382">
    <property type="entry name" value="AAA"/>
    <property type="match status" value="1"/>
</dbReference>
<dbReference type="SUPFAM" id="SSF90123">
    <property type="entry name" value="ABC transporter transmembrane region"/>
    <property type="match status" value="1"/>
</dbReference>
<dbReference type="SUPFAM" id="SSF52540">
    <property type="entry name" value="P-loop containing nucleoside triphosphate hydrolases"/>
    <property type="match status" value="1"/>
</dbReference>
<dbReference type="PROSITE" id="PS50929">
    <property type="entry name" value="ABC_TM1F"/>
    <property type="match status" value="1"/>
</dbReference>
<dbReference type="PROSITE" id="PS00211">
    <property type="entry name" value="ABC_TRANSPORTER_1"/>
    <property type="match status" value="1"/>
</dbReference>
<dbReference type="PROSITE" id="PS50893">
    <property type="entry name" value="ABC_TRANSPORTER_2"/>
    <property type="match status" value="1"/>
</dbReference>
<dbReference type="PROSITE" id="PS51239">
    <property type="entry name" value="MSBA"/>
    <property type="match status" value="1"/>
</dbReference>
<organism>
    <name type="scientific">Xanthomonas campestris pv. campestris (strain 8004)</name>
    <dbReference type="NCBI Taxonomy" id="314565"/>
    <lineage>
        <taxon>Bacteria</taxon>
        <taxon>Pseudomonadati</taxon>
        <taxon>Pseudomonadota</taxon>
        <taxon>Gammaproteobacteria</taxon>
        <taxon>Lysobacterales</taxon>
        <taxon>Lysobacteraceae</taxon>
        <taxon>Xanthomonas</taxon>
    </lineage>
</organism>
<sequence>MKTINENAPQVSSWQTYRRLLAFAKPYRLLLVAALIAALIEAAGTTGFLALMKPITDETFIYKNAEVSRWLPVQIILLFVIRGAAGYITDMAMGKSARSIARDLRVKVMSKYLRLPGSRFDSEPVPSMLIRLGSDSDQVAQAAVDAVKVMIQQSLQVIGALALMLWHSWQVTLTILVLAPVLAWVMDKVARRYRRISHSIQESGAHLLQAADQTLSSHQEVKIYGAQQSEMERYSGLADRNLRLAMKVESTRGISTATVQMIGAIGLSALLFVAGAQALAGRLTAGDFVVLMTSMLTIIPGLKQLTNVQNMVQRGLASAERLFSVLDSPDEPDQGQVPLTRAKGLIEFRDVTARYPGQANPALADVSFVAQPGTVTAIVGRSGSGKSSLIKLIPRFYEAESGQILLDGHPVQAYALADLRRQIALVGQQVMLFDGSIAENVAYGEMRQCDAGQLERAIQGANAMEFVAQLPEGLQSHVGTKGGRLSGGQRQRLAIARAMLKDAPILILDEATAALDNESERLVQDALHKLMPDRTTLVIAHRLSTIEHADQVLVMDQGRIVERGTHQELLALGGLYSHLHGMQFRERQA</sequence>
<name>MSBA_XANC8</name>
<proteinExistence type="inferred from homology"/>
<evidence type="ECO:0000255" key="1">
    <source>
        <dbReference type="HAMAP-Rule" id="MF_01703"/>
    </source>
</evidence>
<reference key="1">
    <citation type="journal article" date="2005" name="Genome Res.">
        <title>Comparative and functional genomic analyses of the pathogenicity of phytopathogen Xanthomonas campestris pv. campestris.</title>
        <authorList>
            <person name="Qian W."/>
            <person name="Jia Y."/>
            <person name="Ren S.-X."/>
            <person name="He Y.-Q."/>
            <person name="Feng J.-X."/>
            <person name="Lu L.-F."/>
            <person name="Sun Q."/>
            <person name="Ying G."/>
            <person name="Tang D.-J."/>
            <person name="Tang H."/>
            <person name="Wu W."/>
            <person name="Hao P."/>
            <person name="Wang L."/>
            <person name="Jiang B.-L."/>
            <person name="Zeng S."/>
            <person name="Gu W.-Y."/>
            <person name="Lu G."/>
            <person name="Rong L."/>
            <person name="Tian Y."/>
            <person name="Yao Z."/>
            <person name="Fu G."/>
            <person name="Chen B."/>
            <person name="Fang R."/>
            <person name="Qiang B."/>
            <person name="Chen Z."/>
            <person name="Zhao G.-P."/>
            <person name="Tang J.-L."/>
            <person name="He C."/>
        </authorList>
    </citation>
    <scope>NUCLEOTIDE SEQUENCE [LARGE SCALE GENOMIC DNA]</scope>
    <source>
        <strain>8004</strain>
    </source>
</reference>
<gene>
    <name evidence="1" type="primary">msbA</name>
    <name type="ordered locus">XC_1995</name>
</gene>
<keyword id="KW-0067">ATP-binding</keyword>
<keyword id="KW-0997">Cell inner membrane</keyword>
<keyword id="KW-1003">Cell membrane</keyword>
<keyword id="KW-0445">Lipid transport</keyword>
<keyword id="KW-0472">Membrane</keyword>
<keyword id="KW-0547">Nucleotide-binding</keyword>
<keyword id="KW-1278">Translocase</keyword>
<keyword id="KW-0812">Transmembrane</keyword>
<keyword id="KW-1133">Transmembrane helix</keyword>
<keyword id="KW-0813">Transport</keyword>
<accession>Q4UV65</accession>
<protein>
    <recommendedName>
        <fullName evidence="1">ATP-dependent lipid A-core flippase</fullName>
        <ecNumber evidence="1">7.5.2.6</ecNumber>
    </recommendedName>
    <alternativeName>
        <fullName evidence="1">Lipid A export ATP-binding/permease protein MsbA</fullName>
    </alternativeName>
</protein>
<feature type="chain" id="PRO_0000271664" description="ATP-dependent lipid A-core flippase">
    <location>
        <begin position="1"/>
        <end position="589"/>
    </location>
</feature>
<feature type="transmembrane region" description="Helical" evidence="1">
    <location>
        <begin position="29"/>
        <end position="49"/>
    </location>
</feature>
<feature type="transmembrane region" description="Helical" evidence="1">
    <location>
        <begin position="70"/>
        <end position="90"/>
    </location>
</feature>
<feature type="transmembrane region" description="Helical" evidence="1">
    <location>
        <begin position="157"/>
        <end position="177"/>
    </location>
</feature>
<feature type="transmembrane region" description="Helical" evidence="1">
    <location>
        <begin position="261"/>
        <end position="281"/>
    </location>
</feature>
<feature type="transmembrane region" description="Helical" evidence="1">
    <location>
        <begin position="283"/>
        <end position="303"/>
    </location>
</feature>
<feature type="domain" description="ABC transmembrane type-1" evidence="1">
    <location>
        <begin position="32"/>
        <end position="314"/>
    </location>
</feature>
<feature type="domain" description="ABC transporter" evidence="1">
    <location>
        <begin position="346"/>
        <end position="582"/>
    </location>
</feature>
<feature type="binding site" evidence="1">
    <location>
        <begin position="380"/>
        <end position="387"/>
    </location>
    <ligand>
        <name>ATP</name>
        <dbReference type="ChEBI" id="CHEBI:30616"/>
    </ligand>
</feature>
<comment type="function">
    <text evidence="1">Involved in lipopolysaccharide (LPS) biosynthesis. Translocates lipid A-core from the inner to the outer leaflet of the inner membrane. Transmembrane domains (TMD) form a pore in the inner membrane and the ATP-binding domain (NBD) is responsible for energy generation.</text>
</comment>
<comment type="catalytic activity">
    <reaction evidence="1">
        <text>ATP + H2O + lipid A-core oligosaccharideSide 1 = ADP + phosphate + lipid A-core oligosaccharideSide 2.</text>
        <dbReference type="EC" id="7.5.2.6"/>
    </reaction>
</comment>
<comment type="subunit">
    <text evidence="1">Homodimer.</text>
</comment>
<comment type="subcellular location">
    <subcellularLocation>
        <location evidence="1">Cell inner membrane</location>
        <topology evidence="1">Multi-pass membrane protein</topology>
    </subcellularLocation>
</comment>
<comment type="domain">
    <text evidence="1">In MsbA the ATP-binding domain (NBD) and the transmembrane domain (TMD) are fused.</text>
</comment>
<comment type="similarity">
    <text evidence="1">Belongs to the ABC transporter superfamily. Lipid exporter (TC 3.A.1.106) family.</text>
</comment>